<accession>Q6FCT7</accession>
<sequence length="189" mass="20705">MIAGVDEAGRGPLVGSVVAAAVILDPHNPIDGLNDSKKLTEKKREKLFVEIQEKALAWSIAEANHIEIDELNILQATFLAMRRAVDGLQIQPDKVLVDGNQIPKGISIHCEAIVGGDASHAEISAASILAKVYRDQQMKLLDEKYPLFGFAKHKGYPTKAHFQAIAIHGVVDEHRRSYAPVRRALNIDC</sequence>
<reference key="1">
    <citation type="journal article" date="2004" name="Nucleic Acids Res.">
        <title>Unique features revealed by the genome sequence of Acinetobacter sp. ADP1, a versatile and naturally transformation competent bacterium.</title>
        <authorList>
            <person name="Barbe V."/>
            <person name="Vallenet D."/>
            <person name="Fonknechten N."/>
            <person name="Kreimeyer A."/>
            <person name="Oztas S."/>
            <person name="Labarre L."/>
            <person name="Cruveiller S."/>
            <person name="Robert C."/>
            <person name="Duprat S."/>
            <person name="Wincker P."/>
            <person name="Ornston L.N."/>
            <person name="Weissenbach J."/>
            <person name="Marliere P."/>
            <person name="Cohen G.N."/>
            <person name="Medigue C."/>
        </authorList>
    </citation>
    <scope>NUCLEOTIDE SEQUENCE [LARGE SCALE GENOMIC DNA]</scope>
    <source>
        <strain>ATCC 33305 / BD413 / ADP1</strain>
    </source>
</reference>
<keyword id="KW-0963">Cytoplasm</keyword>
<keyword id="KW-0255">Endonuclease</keyword>
<keyword id="KW-0378">Hydrolase</keyword>
<keyword id="KW-0464">Manganese</keyword>
<keyword id="KW-0479">Metal-binding</keyword>
<keyword id="KW-0540">Nuclease</keyword>
<comment type="function">
    <text evidence="1">Endonuclease that specifically degrades the RNA of RNA-DNA hybrids.</text>
</comment>
<comment type="catalytic activity">
    <reaction evidence="1">
        <text>Endonucleolytic cleavage to 5'-phosphomonoester.</text>
        <dbReference type="EC" id="3.1.26.4"/>
    </reaction>
</comment>
<comment type="cofactor">
    <cofactor evidence="1">
        <name>Mn(2+)</name>
        <dbReference type="ChEBI" id="CHEBI:29035"/>
    </cofactor>
    <cofactor evidence="1">
        <name>Mg(2+)</name>
        <dbReference type="ChEBI" id="CHEBI:18420"/>
    </cofactor>
    <text evidence="1">Manganese or magnesium. Binds 1 divalent metal ion per monomer in the absence of substrate. May bind a second metal ion after substrate binding.</text>
</comment>
<comment type="subcellular location">
    <subcellularLocation>
        <location evidence="1">Cytoplasm</location>
    </subcellularLocation>
</comment>
<comment type="similarity">
    <text evidence="1">Belongs to the RNase HII family.</text>
</comment>
<dbReference type="EC" id="3.1.26.4" evidence="1"/>
<dbReference type="EMBL" id="CR543861">
    <property type="protein sequence ID" value="CAG68122.1"/>
    <property type="molecule type" value="Genomic_DNA"/>
</dbReference>
<dbReference type="SMR" id="Q6FCT7"/>
<dbReference type="STRING" id="202950.GCA_001485005_01015"/>
<dbReference type="KEGG" id="aci:ACIAD1248"/>
<dbReference type="eggNOG" id="COG0164">
    <property type="taxonomic scope" value="Bacteria"/>
</dbReference>
<dbReference type="HOGENOM" id="CLU_036532_3_2_6"/>
<dbReference type="Proteomes" id="UP000000430">
    <property type="component" value="Chromosome"/>
</dbReference>
<dbReference type="GO" id="GO:0005737">
    <property type="term" value="C:cytoplasm"/>
    <property type="evidence" value="ECO:0007669"/>
    <property type="project" value="UniProtKB-SubCell"/>
</dbReference>
<dbReference type="GO" id="GO:0032299">
    <property type="term" value="C:ribonuclease H2 complex"/>
    <property type="evidence" value="ECO:0007669"/>
    <property type="project" value="TreeGrafter"/>
</dbReference>
<dbReference type="GO" id="GO:0030145">
    <property type="term" value="F:manganese ion binding"/>
    <property type="evidence" value="ECO:0007669"/>
    <property type="project" value="UniProtKB-UniRule"/>
</dbReference>
<dbReference type="GO" id="GO:0003723">
    <property type="term" value="F:RNA binding"/>
    <property type="evidence" value="ECO:0007669"/>
    <property type="project" value="InterPro"/>
</dbReference>
<dbReference type="GO" id="GO:0004523">
    <property type="term" value="F:RNA-DNA hybrid ribonuclease activity"/>
    <property type="evidence" value="ECO:0007669"/>
    <property type="project" value="UniProtKB-UniRule"/>
</dbReference>
<dbReference type="GO" id="GO:0043137">
    <property type="term" value="P:DNA replication, removal of RNA primer"/>
    <property type="evidence" value="ECO:0007669"/>
    <property type="project" value="TreeGrafter"/>
</dbReference>
<dbReference type="GO" id="GO:0006298">
    <property type="term" value="P:mismatch repair"/>
    <property type="evidence" value="ECO:0007669"/>
    <property type="project" value="TreeGrafter"/>
</dbReference>
<dbReference type="CDD" id="cd07182">
    <property type="entry name" value="RNase_HII_bacteria_HII_like"/>
    <property type="match status" value="1"/>
</dbReference>
<dbReference type="FunFam" id="3.30.420.10:FF:000006">
    <property type="entry name" value="Ribonuclease HII"/>
    <property type="match status" value="1"/>
</dbReference>
<dbReference type="Gene3D" id="3.30.420.10">
    <property type="entry name" value="Ribonuclease H-like superfamily/Ribonuclease H"/>
    <property type="match status" value="1"/>
</dbReference>
<dbReference type="HAMAP" id="MF_00052_B">
    <property type="entry name" value="RNase_HII_B"/>
    <property type="match status" value="1"/>
</dbReference>
<dbReference type="InterPro" id="IPR022898">
    <property type="entry name" value="RNase_HII"/>
</dbReference>
<dbReference type="InterPro" id="IPR001352">
    <property type="entry name" value="RNase_HII/HIII"/>
</dbReference>
<dbReference type="InterPro" id="IPR024567">
    <property type="entry name" value="RNase_HII/HIII_dom"/>
</dbReference>
<dbReference type="InterPro" id="IPR012337">
    <property type="entry name" value="RNaseH-like_sf"/>
</dbReference>
<dbReference type="InterPro" id="IPR036397">
    <property type="entry name" value="RNaseH_sf"/>
</dbReference>
<dbReference type="NCBIfam" id="NF000595">
    <property type="entry name" value="PRK00015.1-3"/>
    <property type="match status" value="1"/>
</dbReference>
<dbReference type="NCBIfam" id="NF000596">
    <property type="entry name" value="PRK00015.1-4"/>
    <property type="match status" value="1"/>
</dbReference>
<dbReference type="PANTHER" id="PTHR10954">
    <property type="entry name" value="RIBONUCLEASE H2 SUBUNIT A"/>
    <property type="match status" value="1"/>
</dbReference>
<dbReference type="PANTHER" id="PTHR10954:SF18">
    <property type="entry name" value="RIBONUCLEASE HII"/>
    <property type="match status" value="1"/>
</dbReference>
<dbReference type="Pfam" id="PF01351">
    <property type="entry name" value="RNase_HII"/>
    <property type="match status" value="1"/>
</dbReference>
<dbReference type="SUPFAM" id="SSF53098">
    <property type="entry name" value="Ribonuclease H-like"/>
    <property type="match status" value="1"/>
</dbReference>
<dbReference type="PROSITE" id="PS51975">
    <property type="entry name" value="RNASE_H_2"/>
    <property type="match status" value="1"/>
</dbReference>
<feature type="chain" id="PRO_0000111531" description="Ribonuclease HII">
    <location>
        <begin position="1"/>
        <end position="189"/>
    </location>
</feature>
<feature type="domain" description="RNase H type-2" evidence="2">
    <location>
        <begin position="1"/>
        <end position="189"/>
    </location>
</feature>
<feature type="binding site" evidence="1">
    <location>
        <position position="6"/>
    </location>
    <ligand>
        <name>a divalent metal cation</name>
        <dbReference type="ChEBI" id="CHEBI:60240"/>
    </ligand>
</feature>
<feature type="binding site" evidence="1">
    <location>
        <position position="7"/>
    </location>
    <ligand>
        <name>a divalent metal cation</name>
        <dbReference type="ChEBI" id="CHEBI:60240"/>
    </ligand>
</feature>
<feature type="binding site" evidence="1">
    <location>
        <position position="98"/>
    </location>
    <ligand>
        <name>a divalent metal cation</name>
        <dbReference type="ChEBI" id="CHEBI:60240"/>
    </ligand>
</feature>
<gene>
    <name evidence="1" type="primary">rnhB</name>
    <name type="ordered locus">ACIAD1248</name>
</gene>
<organism>
    <name type="scientific">Acinetobacter baylyi (strain ATCC 33305 / BD413 / ADP1)</name>
    <dbReference type="NCBI Taxonomy" id="62977"/>
    <lineage>
        <taxon>Bacteria</taxon>
        <taxon>Pseudomonadati</taxon>
        <taxon>Pseudomonadota</taxon>
        <taxon>Gammaproteobacteria</taxon>
        <taxon>Moraxellales</taxon>
        <taxon>Moraxellaceae</taxon>
        <taxon>Acinetobacter</taxon>
    </lineage>
</organism>
<protein>
    <recommendedName>
        <fullName evidence="1">Ribonuclease HII</fullName>
        <shortName evidence="1">RNase HII</shortName>
        <ecNumber evidence="1">3.1.26.4</ecNumber>
    </recommendedName>
</protein>
<evidence type="ECO:0000255" key="1">
    <source>
        <dbReference type="HAMAP-Rule" id="MF_00052"/>
    </source>
</evidence>
<evidence type="ECO:0000255" key="2">
    <source>
        <dbReference type="PROSITE-ProRule" id="PRU01319"/>
    </source>
</evidence>
<proteinExistence type="inferred from homology"/>
<name>RNH2_ACIAD</name>